<name>SOX1_MOUSE</name>
<organism>
    <name type="scientific">Mus musculus</name>
    <name type="common">Mouse</name>
    <dbReference type="NCBI Taxonomy" id="10090"/>
    <lineage>
        <taxon>Eukaryota</taxon>
        <taxon>Metazoa</taxon>
        <taxon>Chordata</taxon>
        <taxon>Craniata</taxon>
        <taxon>Vertebrata</taxon>
        <taxon>Euteleostomi</taxon>
        <taxon>Mammalia</taxon>
        <taxon>Eutheria</taxon>
        <taxon>Euarchontoglires</taxon>
        <taxon>Glires</taxon>
        <taxon>Rodentia</taxon>
        <taxon>Myomorpha</taxon>
        <taxon>Muroidea</taxon>
        <taxon>Muridae</taxon>
        <taxon>Murinae</taxon>
        <taxon>Mus</taxon>
        <taxon>Mus</taxon>
    </lineage>
</organism>
<feature type="chain" id="PRO_0000048713" description="Transcription factor SOX-1">
    <location>
        <begin position="1"/>
        <end position="391"/>
    </location>
</feature>
<feature type="DNA-binding region" description="HMG box" evidence="3">
    <location>
        <begin position="51"/>
        <end position="119"/>
    </location>
</feature>
<feature type="region of interest" description="Disordered" evidence="4">
    <location>
        <begin position="1"/>
        <end position="52"/>
    </location>
</feature>
<feature type="region of interest" description="Disordered" evidence="4">
    <location>
        <begin position="214"/>
        <end position="249"/>
    </location>
</feature>
<feature type="short sequence motif" description="9aaTAD" evidence="2">
    <location>
        <begin position="342"/>
        <end position="350"/>
    </location>
</feature>
<feature type="compositionally biased region" description="Gly residues" evidence="4">
    <location>
        <begin position="26"/>
        <end position="44"/>
    </location>
</feature>
<feature type="compositionally biased region" description="Basic residues" evidence="4">
    <location>
        <begin position="224"/>
        <end position="240"/>
    </location>
</feature>
<feature type="sequence conflict" description="In Ref. 1; CAA63846." evidence="5" ref="1">
    <original>G</original>
    <variation>R</variation>
    <location>
        <position position="29"/>
    </location>
</feature>
<feature type="sequence conflict" description="In Ref. 1; CAA63846." evidence="5" ref="1">
    <original>A</original>
    <variation>R</variation>
    <location>
        <position position="222"/>
    </location>
</feature>
<proteinExistence type="evidence at transcript level"/>
<gene>
    <name type="primary">Sox1</name>
    <name type="synonym">Sox-1</name>
</gene>
<reference key="1">
    <citation type="journal article" date="1996" name="Development">
        <title>A comparison of the properties of Sox-3 with Sry and two related genes, Sox-1 and Sox-2.</title>
        <authorList>
            <person name="Collignon J."/>
            <person name="Sockanathan S."/>
            <person name="Hacker A."/>
            <person name="Cohen-Tannoudji M."/>
            <person name="Norris D."/>
            <person name="Rastan S."/>
            <person name="Stevanovic M."/>
            <person name="Goodfellow P.N."/>
            <person name="Lovell-Badge R."/>
        </authorList>
    </citation>
    <scope>NUCLEOTIDE SEQUENCE [GENOMIC DNA]</scope>
    <source>
        <strain>129</strain>
    </source>
</reference>
<reference key="2">
    <citation type="journal article" date="2004" name="Mol. Cell. Biol.">
        <title>Interplay of SOX and POU factors in regulation of the nestin gene in neural primordial cells.</title>
        <authorList>
            <person name="Tanaka S."/>
            <person name="Kamachi Y."/>
            <person name="Tanouchi A."/>
            <person name="Hamada H."/>
            <person name="Jing N."/>
            <person name="Kondoh H."/>
        </authorList>
    </citation>
    <scope>NUCLEOTIDE SEQUENCE [MRNA]</scope>
    <source>
        <strain>129/Ola</strain>
    </source>
</reference>
<reference key="3">
    <citation type="journal article" date="2009" name="PLoS Biol.">
        <title>Lineage-specific biology revealed by a finished genome assembly of the mouse.</title>
        <authorList>
            <person name="Church D.M."/>
            <person name="Goodstadt L."/>
            <person name="Hillier L.W."/>
            <person name="Zody M.C."/>
            <person name="Goldstein S."/>
            <person name="She X."/>
            <person name="Bult C.J."/>
            <person name="Agarwala R."/>
            <person name="Cherry J.L."/>
            <person name="DiCuccio M."/>
            <person name="Hlavina W."/>
            <person name="Kapustin Y."/>
            <person name="Meric P."/>
            <person name="Maglott D."/>
            <person name="Birtle Z."/>
            <person name="Marques A.C."/>
            <person name="Graves T."/>
            <person name="Zhou S."/>
            <person name="Teague B."/>
            <person name="Potamousis K."/>
            <person name="Churas C."/>
            <person name="Place M."/>
            <person name="Herschleb J."/>
            <person name="Runnheim R."/>
            <person name="Forrest D."/>
            <person name="Amos-Landgraf J."/>
            <person name="Schwartz D.C."/>
            <person name="Cheng Z."/>
            <person name="Lindblad-Toh K."/>
            <person name="Eichler E.E."/>
            <person name="Ponting C.P."/>
        </authorList>
    </citation>
    <scope>NUCLEOTIDE SEQUENCE [LARGE SCALE GENOMIC DNA]</scope>
    <source>
        <strain>C57BL/6J</strain>
    </source>
</reference>
<accession>P53783</accession>
<accession>Q80XF2</accession>
<keyword id="KW-0010">Activator</keyword>
<keyword id="KW-0238">DNA-binding</keyword>
<keyword id="KW-0539">Nucleus</keyword>
<keyword id="KW-1185">Reference proteome</keyword>
<keyword id="KW-0804">Transcription</keyword>
<keyword id="KW-0805">Transcription regulation</keyword>
<dbReference type="EMBL" id="X94126">
    <property type="protein sequence ID" value="CAA63846.1"/>
    <property type="molecule type" value="Genomic_DNA"/>
</dbReference>
<dbReference type="EMBL" id="AB108672">
    <property type="protein sequence ID" value="BAC75667.1"/>
    <property type="molecule type" value="mRNA"/>
</dbReference>
<dbReference type="EMBL" id="AC102525">
    <property type="status" value="NOT_ANNOTATED_CDS"/>
    <property type="molecule type" value="Genomic_DNA"/>
</dbReference>
<dbReference type="CCDS" id="CCDS57605.1"/>
<dbReference type="PIR" id="S10950">
    <property type="entry name" value="S10950"/>
</dbReference>
<dbReference type="RefSeq" id="NP_033259.2">
    <property type="nucleotide sequence ID" value="NM_009233.3"/>
</dbReference>
<dbReference type="SMR" id="P53783"/>
<dbReference type="BioGRID" id="203396">
    <property type="interactions" value="1"/>
</dbReference>
<dbReference type="FunCoup" id="P53783">
    <property type="interactions" value="660"/>
</dbReference>
<dbReference type="STRING" id="10090.ENSMUSP00000137203"/>
<dbReference type="GlyGen" id="P53783">
    <property type="glycosylation" value="4 sites, 1 N-linked glycan (1 site), 1 O-linked glycan (3 sites)"/>
</dbReference>
<dbReference type="iPTMnet" id="P53783"/>
<dbReference type="PhosphoSitePlus" id="P53783"/>
<dbReference type="PaxDb" id="10090-ENSMUSP00000137203"/>
<dbReference type="PeptideAtlas" id="P53783"/>
<dbReference type="ProteomicsDB" id="257285"/>
<dbReference type="Antibodypedia" id="25675">
    <property type="antibodies" value="307 antibodies from 36 providers"/>
</dbReference>
<dbReference type="DNASU" id="20664"/>
<dbReference type="Ensembl" id="ENSMUST00000180353.2">
    <property type="protein sequence ID" value="ENSMUSP00000137203.2"/>
    <property type="gene ID" value="ENSMUSG00000096014.2"/>
</dbReference>
<dbReference type="GeneID" id="20664"/>
<dbReference type="KEGG" id="mmu:20664"/>
<dbReference type="UCSC" id="uc009kwa.2">
    <property type="organism name" value="mouse"/>
</dbReference>
<dbReference type="AGR" id="MGI:98357"/>
<dbReference type="CTD" id="6656"/>
<dbReference type="MGI" id="MGI:98357">
    <property type="gene designation" value="Sox1"/>
</dbReference>
<dbReference type="VEuPathDB" id="HostDB:ENSMUSG00000096014"/>
<dbReference type="eggNOG" id="KOG0527">
    <property type="taxonomic scope" value="Eukaryota"/>
</dbReference>
<dbReference type="GeneTree" id="ENSGT00940000162479"/>
<dbReference type="HOGENOM" id="CLU_021123_0_0_1"/>
<dbReference type="InParanoid" id="P53783"/>
<dbReference type="OMA" id="MMETDMH"/>
<dbReference type="OrthoDB" id="6247875at2759"/>
<dbReference type="PhylomeDB" id="P53783"/>
<dbReference type="TreeFam" id="TF351735"/>
<dbReference type="BioGRID-ORCS" id="20664">
    <property type="hits" value="0 hits in 77 CRISPR screens"/>
</dbReference>
<dbReference type="PRO" id="PR:P53783"/>
<dbReference type="Proteomes" id="UP000000589">
    <property type="component" value="Chromosome 8"/>
</dbReference>
<dbReference type="RNAct" id="P53783">
    <property type="molecule type" value="protein"/>
</dbReference>
<dbReference type="Bgee" id="ENSMUSG00000096014">
    <property type="expression patterns" value="Expressed in medial ganglionic eminence and 84 other cell types or tissues"/>
</dbReference>
<dbReference type="GO" id="GO:0005654">
    <property type="term" value="C:nucleoplasm"/>
    <property type="evidence" value="ECO:0000304"/>
    <property type="project" value="Reactome"/>
</dbReference>
<dbReference type="GO" id="GO:0005634">
    <property type="term" value="C:nucleus"/>
    <property type="evidence" value="ECO:0000314"/>
    <property type="project" value="MGI"/>
</dbReference>
<dbReference type="GO" id="GO:0003677">
    <property type="term" value="F:DNA binding"/>
    <property type="evidence" value="ECO:0000314"/>
    <property type="project" value="UniProtKB"/>
</dbReference>
<dbReference type="GO" id="GO:0001228">
    <property type="term" value="F:DNA-binding transcription activator activity, RNA polymerase II-specific"/>
    <property type="evidence" value="ECO:0000314"/>
    <property type="project" value="NTNU_SB"/>
</dbReference>
<dbReference type="GO" id="GO:0000978">
    <property type="term" value="F:RNA polymerase II cis-regulatory region sequence-specific DNA binding"/>
    <property type="evidence" value="ECO:0000314"/>
    <property type="project" value="NTNU_SB"/>
</dbReference>
<dbReference type="GO" id="GO:0043565">
    <property type="term" value="F:sequence-specific DNA binding"/>
    <property type="evidence" value="ECO:0000314"/>
    <property type="project" value="MGI"/>
</dbReference>
<dbReference type="GO" id="GO:1990830">
    <property type="term" value="P:cellular response to leukemia inhibitory factor"/>
    <property type="evidence" value="ECO:0000314"/>
    <property type="project" value="MGI"/>
</dbReference>
<dbReference type="GO" id="GO:0030900">
    <property type="term" value="P:forebrain development"/>
    <property type="evidence" value="ECO:0000315"/>
    <property type="project" value="MGI"/>
</dbReference>
<dbReference type="GO" id="GO:0021884">
    <property type="term" value="P:forebrain neuron development"/>
    <property type="evidence" value="ECO:0000315"/>
    <property type="project" value="MGI"/>
</dbReference>
<dbReference type="GO" id="GO:0021879">
    <property type="term" value="P:forebrain neuron differentiation"/>
    <property type="evidence" value="ECO:0000315"/>
    <property type="project" value="MGI"/>
</dbReference>
<dbReference type="GO" id="GO:1904936">
    <property type="term" value="P:interneuron migration"/>
    <property type="evidence" value="ECO:0000315"/>
    <property type="project" value="UniProtKB"/>
</dbReference>
<dbReference type="GO" id="GO:0002089">
    <property type="term" value="P:lens morphogenesis in camera-type eye"/>
    <property type="evidence" value="ECO:0000315"/>
    <property type="project" value="MGI"/>
</dbReference>
<dbReference type="GO" id="GO:0000122">
    <property type="term" value="P:negative regulation of transcription by RNA polymerase II"/>
    <property type="evidence" value="ECO:0000315"/>
    <property type="project" value="UniProtKB"/>
</dbReference>
<dbReference type="GO" id="GO:0001764">
    <property type="term" value="P:neuron migration"/>
    <property type="evidence" value="ECO:0000315"/>
    <property type="project" value="MGI"/>
</dbReference>
<dbReference type="GO" id="GO:0045944">
    <property type="term" value="P:positive regulation of transcription by RNA polymerase II"/>
    <property type="evidence" value="ECO:0000314"/>
    <property type="project" value="NTNU_SB"/>
</dbReference>
<dbReference type="GO" id="GO:0048713">
    <property type="term" value="P:regulation of oligodendrocyte differentiation"/>
    <property type="evidence" value="ECO:0000315"/>
    <property type="project" value="UniProtKB"/>
</dbReference>
<dbReference type="GO" id="GO:0021521">
    <property type="term" value="P:ventral spinal cord interneuron specification"/>
    <property type="evidence" value="ECO:0000315"/>
    <property type="project" value="MGI"/>
</dbReference>
<dbReference type="CDD" id="cd01388">
    <property type="entry name" value="HMG-box_SoxB"/>
    <property type="match status" value="1"/>
</dbReference>
<dbReference type="FunFam" id="1.10.30.10:FF:000002">
    <property type="entry name" value="transcription factor Sox-2"/>
    <property type="match status" value="1"/>
</dbReference>
<dbReference type="Gene3D" id="1.10.30.10">
    <property type="entry name" value="High mobility group box domain"/>
    <property type="match status" value="1"/>
</dbReference>
<dbReference type="InterPro" id="IPR009071">
    <property type="entry name" value="HMG_box_dom"/>
</dbReference>
<dbReference type="InterPro" id="IPR036910">
    <property type="entry name" value="HMG_box_dom_sf"/>
</dbReference>
<dbReference type="InterPro" id="IPR022097">
    <property type="entry name" value="SOX_fam"/>
</dbReference>
<dbReference type="InterPro" id="IPR050140">
    <property type="entry name" value="SRY-related_HMG-box_TF-like"/>
</dbReference>
<dbReference type="PANTHER" id="PTHR10270">
    <property type="entry name" value="SOX TRANSCRIPTION FACTOR"/>
    <property type="match status" value="1"/>
</dbReference>
<dbReference type="PANTHER" id="PTHR10270:SF328">
    <property type="entry name" value="TRANSCRIPTION FACTOR SOX-1"/>
    <property type="match status" value="1"/>
</dbReference>
<dbReference type="Pfam" id="PF00505">
    <property type="entry name" value="HMG_box"/>
    <property type="match status" value="1"/>
</dbReference>
<dbReference type="Pfam" id="PF12336">
    <property type="entry name" value="SOXp"/>
    <property type="match status" value="1"/>
</dbReference>
<dbReference type="SMART" id="SM00398">
    <property type="entry name" value="HMG"/>
    <property type="match status" value="1"/>
</dbReference>
<dbReference type="SUPFAM" id="SSF47095">
    <property type="entry name" value="HMG-box"/>
    <property type="match status" value="1"/>
</dbReference>
<dbReference type="PROSITE" id="PS50118">
    <property type="entry name" value="HMG_BOX_2"/>
    <property type="match status" value="1"/>
</dbReference>
<sequence>MYSMMMETDLHSPGGAQAPTNLSGPAGAGGGGGGGGGGGGGGGTKANQDRVKRPMNAFMVWSRGQRRKMAQENPKMHNSEISKRLGAEWKVMSEAEKRPFIDEAKRLRALHMKEHPDYKYRPRRKTKTLLKKDKYSLAGGLLAAGAGGGGAAVAMGVGVGVGAAAVGQRLESPGGAAGGGYAHVNGWANGAYPGSVAAAAAAAAMMQEAQLAYGQHPGAGGAHPHAHPAHPHPHHPHAHPHNPQPMHRYDMGALQYSPISNSQGYMSASPSGYGGIPYGAAAAAAAAAGGAHQNSAVAAAAAAAAASSGALGALGSLVKSEPSGSPPAPAHSRAPCPGDLREMISMYLPAGEGGDPAAAAAAAAQSRLHSLPQHYQGAGAGVNGTVPLTHI</sequence>
<protein>
    <recommendedName>
        <fullName>Transcription factor SOX-1</fullName>
    </recommendedName>
</protein>
<evidence type="ECO:0000250" key="1"/>
<evidence type="ECO:0000250" key="2">
    <source>
        <dbReference type="UniProtKB" id="P41225"/>
    </source>
</evidence>
<evidence type="ECO:0000255" key="3">
    <source>
        <dbReference type="PROSITE-ProRule" id="PRU00267"/>
    </source>
</evidence>
<evidence type="ECO:0000256" key="4">
    <source>
        <dbReference type="SAM" id="MobiDB-lite"/>
    </source>
</evidence>
<evidence type="ECO:0000305" key="5"/>
<comment type="function">
    <text evidence="1">Transcriptional activator. May function as a switch in neuronal development. Keeps neural cells undifferentiated by counteracting the activity of proneural proteins and suppresses neuronal differentiation (By similarity).</text>
</comment>
<comment type="subcellular location">
    <subcellularLocation>
        <location evidence="5">Nucleus</location>
    </subcellularLocation>
</comment>
<comment type="tissue specificity">
    <text>Mainly in the developing central nervous system. Expressed in developing urogenital ridge.</text>
</comment>
<comment type="domain">
    <text evidence="2">The 9aaTAD motif is a transactivation domain present in a large number of yeast and animal transcription factors.</text>
</comment>